<keyword id="KW-0067">ATP-binding</keyword>
<keyword id="KW-0133">Cell shape</keyword>
<keyword id="KW-0961">Cell wall biogenesis/degradation</keyword>
<keyword id="KW-0963">Cytoplasm</keyword>
<keyword id="KW-0436">Ligase</keyword>
<keyword id="KW-0460">Magnesium</keyword>
<keyword id="KW-0464">Manganese</keyword>
<keyword id="KW-0479">Metal-binding</keyword>
<keyword id="KW-0547">Nucleotide-binding</keyword>
<keyword id="KW-0573">Peptidoglycan synthesis</keyword>
<organism>
    <name type="scientific">Aeromonas salmonicida (strain A449)</name>
    <dbReference type="NCBI Taxonomy" id="382245"/>
    <lineage>
        <taxon>Bacteria</taxon>
        <taxon>Pseudomonadati</taxon>
        <taxon>Pseudomonadota</taxon>
        <taxon>Gammaproteobacteria</taxon>
        <taxon>Aeromonadales</taxon>
        <taxon>Aeromonadaceae</taxon>
        <taxon>Aeromonas</taxon>
    </lineage>
</organism>
<evidence type="ECO:0000250" key="1"/>
<evidence type="ECO:0000255" key="2">
    <source>
        <dbReference type="HAMAP-Rule" id="MF_00047"/>
    </source>
</evidence>
<proteinExistence type="inferred from homology"/>
<comment type="function">
    <text evidence="2">Cell wall formation.</text>
</comment>
<comment type="catalytic activity">
    <reaction evidence="2">
        <text>2 D-alanine + ATP = D-alanyl-D-alanine + ADP + phosphate + H(+)</text>
        <dbReference type="Rhea" id="RHEA:11224"/>
        <dbReference type="ChEBI" id="CHEBI:15378"/>
        <dbReference type="ChEBI" id="CHEBI:30616"/>
        <dbReference type="ChEBI" id="CHEBI:43474"/>
        <dbReference type="ChEBI" id="CHEBI:57416"/>
        <dbReference type="ChEBI" id="CHEBI:57822"/>
        <dbReference type="ChEBI" id="CHEBI:456216"/>
        <dbReference type="EC" id="6.3.2.4"/>
    </reaction>
</comment>
<comment type="cofactor">
    <cofactor evidence="1">
        <name>Mg(2+)</name>
        <dbReference type="ChEBI" id="CHEBI:18420"/>
    </cofactor>
    <cofactor evidence="1">
        <name>Mn(2+)</name>
        <dbReference type="ChEBI" id="CHEBI:29035"/>
    </cofactor>
    <text evidence="1">Binds 2 magnesium or manganese ions per subunit.</text>
</comment>
<comment type="pathway">
    <text evidence="2">Cell wall biogenesis; peptidoglycan biosynthesis.</text>
</comment>
<comment type="subcellular location">
    <subcellularLocation>
        <location evidence="2">Cytoplasm</location>
    </subcellularLocation>
</comment>
<comment type="similarity">
    <text evidence="2">Belongs to the D-alanine--D-alanine ligase family.</text>
</comment>
<reference key="1">
    <citation type="journal article" date="2008" name="BMC Genomics">
        <title>The genome of Aeromonas salmonicida subsp. salmonicida A449: insights into the evolution of a fish pathogen.</title>
        <authorList>
            <person name="Reith M.E."/>
            <person name="Singh R.K."/>
            <person name="Curtis B."/>
            <person name="Boyd J.M."/>
            <person name="Bouevitch A."/>
            <person name="Kimball J."/>
            <person name="Munholland J."/>
            <person name="Murphy C."/>
            <person name="Sarty D."/>
            <person name="Williams J."/>
            <person name="Nash J.H."/>
            <person name="Johnson S.C."/>
            <person name="Brown L.L."/>
        </authorList>
    </citation>
    <scope>NUCLEOTIDE SEQUENCE [LARGE SCALE GENOMIC DNA]</scope>
    <source>
        <strain>A449</strain>
    </source>
</reference>
<gene>
    <name evidence="2" type="primary">ddl</name>
    <name type="ordered locus">ASA_2261</name>
</gene>
<feature type="chain" id="PRO_1000074761" description="D-alanine--D-alanine ligase">
    <location>
        <begin position="1"/>
        <end position="329"/>
    </location>
</feature>
<feature type="domain" description="ATP-grasp" evidence="2">
    <location>
        <begin position="120"/>
        <end position="326"/>
    </location>
</feature>
<feature type="binding site" evidence="2">
    <location>
        <begin position="150"/>
        <end position="205"/>
    </location>
    <ligand>
        <name>ATP</name>
        <dbReference type="ChEBI" id="CHEBI:30616"/>
    </ligand>
</feature>
<feature type="binding site" evidence="2">
    <location>
        <position position="280"/>
    </location>
    <ligand>
        <name>Mg(2+)</name>
        <dbReference type="ChEBI" id="CHEBI:18420"/>
        <label>1</label>
    </ligand>
</feature>
<feature type="binding site" evidence="2">
    <location>
        <position position="293"/>
    </location>
    <ligand>
        <name>Mg(2+)</name>
        <dbReference type="ChEBI" id="CHEBI:18420"/>
        <label>1</label>
    </ligand>
</feature>
<feature type="binding site" evidence="2">
    <location>
        <position position="293"/>
    </location>
    <ligand>
        <name>Mg(2+)</name>
        <dbReference type="ChEBI" id="CHEBI:18420"/>
        <label>2</label>
    </ligand>
</feature>
<feature type="binding site" evidence="2">
    <location>
        <position position="295"/>
    </location>
    <ligand>
        <name>Mg(2+)</name>
        <dbReference type="ChEBI" id="CHEBI:18420"/>
        <label>2</label>
    </ligand>
</feature>
<name>DDL_AERS4</name>
<protein>
    <recommendedName>
        <fullName evidence="2">D-alanine--D-alanine ligase</fullName>
        <ecNumber evidence="2">6.3.2.4</ecNumber>
    </recommendedName>
    <alternativeName>
        <fullName evidence="2">D-Ala-D-Ala ligase</fullName>
    </alternativeName>
    <alternativeName>
        <fullName evidence="2">D-alanylalanine synthetase</fullName>
    </alternativeName>
</protein>
<sequence length="329" mass="36361">MKNMHVLLLCGGGGSEHEVSLRSANFLEQQLGLVPGVEVTRVEMFADRWFSADGRECKLGLDKLLSFDSVARPVDYVVPCIHGYPGETGDLQSFLELAGLPYLGCDAEASKICFNKISTKLWLSAIGIPNTPYLFLTEQNDAALTEAKAALAKWGKVFIKAASQGSSVGCYSASNETDLLQGIKDAFGYSEQVLIEKAVKPRELEVAVYQYGDELIATYPGEICVPQDKFYTYEEKYSSASHTATSLKAEGLTQAQADAIHEYALKAFRQLKLTHLSRIDFFLTEEGEILLNEINTFPGMTSISMFPKLLEHHGHSFAHYLEQILRKPA</sequence>
<accession>A4SN40</accession>
<dbReference type="EC" id="6.3.2.4" evidence="2"/>
<dbReference type="EMBL" id="CP000644">
    <property type="protein sequence ID" value="ABO90312.1"/>
    <property type="molecule type" value="Genomic_DNA"/>
</dbReference>
<dbReference type="RefSeq" id="WP_005311087.1">
    <property type="nucleotide sequence ID" value="NC_009348.1"/>
</dbReference>
<dbReference type="SMR" id="A4SN40"/>
<dbReference type="STRING" id="29491.GCA_000820065_01669"/>
<dbReference type="KEGG" id="asa:ASA_2261"/>
<dbReference type="PATRIC" id="fig|382245.13.peg.2215"/>
<dbReference type="eggNOG" id="COG1181">
    <property type="taxonomic scope" value="Bacteria"/>
</dbReference>
<dbReference type="HOGENOM" id="CLU_039268_0_0_6"/>
<dbReference type="UniPathway" id="UPA00219"/>
<dbReference type="Proteomes" id="UP000000225">
    <property type="component" value="Chromosome"/>
</dbReference>
<dbReference type="GO" id="GO:0005829">
    <property type="term" value="C:cytosol"/>
    <property type="evidence" value="ECO:0007669"/>
    <property type="project" value="TreeGrafter"/>
</dbReference>
<dbReference type="GO" id="GO:0005524">
    <property type="term" value="F:ATP binding"/>
    <property type="evidence" value="ECO:0007669"/>
    <property type="project" value="UniProtKB-KW"/>
</dbReference>
<dbReference type="GO" id="GO:0008716">
    <property type="term" value="F:D-alanine-D-alanine ligase activity"/>
    <property type="evidence" value="ECO:0007669"/>
    <property type="project" value="UniProtKB-UniRule"/>
</dbReference>
<dbReference type="GO" id="GO:0046872">
    <property type="term" value="F:metal ion binding"/>
    <property type="evidence" value="ECO:0007669"/>
    <property type="project" value="UniProtKB-KW"/>
</dbReference>
<dbReference type="GO" id="GO:0071555">
    <property type="term" value="P:cell wall organization"/>
    <property type="evidence" value="ECO:0007669"/>
    <property type="project" value="UniProtKB-KW"/>
</dbReference>
<dbReference type="GO" id="GO:0009252">
    <property type="term" value="P:peptidoglycan biosynthetic process"/>
    <property type="evidence" value="ECO:0007669"/>
    <property type="project" value="UniProtKB-UniRule"/>
</dbReference>
<dbReference type="GO" id="GO:0008360">
    <property type="term" value="P:regulation of cell shape"/>
    <property type="evidence" value="ECO:0007669"/>
    <property type="project" value="UniProtKB-KW"/>
</dbReference>
<dbReference type="Gene3D" id="3.40.50.20">
    <property type="match status" value="1"/>
</dbReference>
<dbReference type="Gene3D" id="3.30.1490.20">
    <property type="entry name" value="ATP-grasp fold, A domain"/>
    <property type="match status" value="1"/>
</dbReference>
<dbReference type="Gene3D" id="3.30.470.20">
    <property type="entry name" value="ATP-grasp fold, B domain"/>
    <property type="match status" value="1"/>
</dbReference>
<dbReference type="HAMAP" id="MF_00047">
    <property type="entry name" value="Dala_Dala_lig"/>
    <property type="match status" value="1"/>
</dbReference>
<dbReference type="InterPro" id="IPR011761">
    <property type="entry name" value="ATP-grasp"/>
</dbReference>
<dbReference type="InterPro" id="IPR013815">
    <property type="entry name" value="ATP_grasp_subdomain_1"/>
</dbReference>
<dbReference type="InterPro" id="IPR000291">
    <property type="entry name" value="D-Ala_lig_Van_CS"/>
</dbReference>
<dbReference type="InterPro" id="IPR005905">
    <property type="entry name" value="D_ala_D_ala"/>
</dbReference>
<dbReference type="InterPro" id="IPR011095">
    <property type="entry name" value="Dala_Dala_lig_C"/>
</dbReference>
<dbReference type="InterPro" id="IPR011127">
    <property type="entry name" value="Dala_Dala_lig_N"/>
</dbReference>
<dbReference type="InterPro" id="IPR016185">
    <property type="entry name" value="PreATP-grasp_dom_sf"/>
</dbReference>
<dbReference type="NCBIfam" id="TIGR01205">
    <property type="entry name" value="D_ala_D_alaTIGR"/>
    <property type="match status" value="1"/>
</dbReference>
<dbReference type="NCBIfam" id="NF002527">
    <property type="entry name" value="PRK01966.1-3"/>
    <property type="match status" value="1"/>
</dbReference>
<dbReference type="PANTHER" id="PTHR23132">
    <property type="entry name" value="D-ALANINE--D-ALANINE LIGASE"/>
    <property type="match status" value="1"/>
</dbReference>
<dbReference type="PANTHER" id="PTHR23132:SF25">
    <property type="entry name" value="D-ALANINE--D-ALANINE LIGASE A"/>
    <property type="match status" value="1"/>
</dbReference>
<dbReference type="Pfam" id="PF07478">
    <property type="entry name" value="Dala_Dala_lig_C"/>
    <property type="match status" value="1"/>
</dbReference>
<dbReference type="Pfam" id="PF01820">
    <property type="entry name" value="Dala_Dala_lig_N"/>
    <property type="match status" value="1"/>
</dbReference>
<dbReference type="PIRSF" id="PIRSF039102">
    <property type="entry name" value="Ddl/VanB"/>
    <property type="match status" value="1"/>
</dbReference>
<dbReference type="SUPFAM" id="SSF56059">
    <property type="entry name" value="Glutathione synthetase ATP-binding domain-like"/>
    <property type="match status" value="1"/>
</dbReference>
<dbReference type="SUPFAM" id="SSF52440">
    <property type="entry name" value="PreATP-grasp domain"/>
    <property type="match status" value="1"/>
</dbReference>
<dbReference type="PROSITE" id="PS50975">
    <property type="entry name" value="ATP_GRASP"/>
    <property type="match status" value="1"/>
</dbReference>
<dbReference type="PROSITE" id="PS00843">
    <property type="entry name" value="DALA_DALA_LIGASE_1"/>
    <property type="match status" value="1"/>
</dbReference>
<dbReference type="PROSITE" id="PS00844">
    <property type="entry name" value="DALA_DALA_LIGASE_2"/>
    <property type="match status" value="1"/>
</dbReference>